<gene>
    <name type="primary">yjeM</name>
    <name type="ordered locus">b4156</name>
    <name type="ordered locus">JW5739</name>
</gene>
<comment type="subcellular location">
    <subcellularLocation>
        <location>Cell inner membrane</location>
        <topology>Multi-pass membrane protein</topology>
    </subcellularLocation>
</comment>
<comment type="similarity">
    <text evidence="2">Belongs to the amino acid-polyamine-organocation (APC) superfamily.</text>
</comment>
<comment type="sequence caution" evidence="2">
    <conflict type="erroneous initiation">
        <sequence resource="EMBL-CDS" id="AAA97055"/>
    </conflict>
    <text>Extended N-terminus.</text>
</comment>
<evidence type="ECO:0000255" key="1"/>
<evidence type="ECO:0000305" key="2"/>
<reference key="1">
    <citation type="journal article" date="1995" name="Nucleic Acids Res.">
        <title>Analysis of the Escherichia coli genome VI: DNA sequence of the region from 92.8 through 100 minutes.</title>
        <authorList>
            <person name="Burland V.D."/>
            <person name="Plunkett G. III"/>
            <person name="Sofia H.J."/>
            <person name="Daniels D.L."/>
            <person name="Blattner F.R."/>
        </authorList>
    </citation>
    <scope>NUCLEOTIDE SEQUENCE [LARGE SCALE GENOMIC DNA]</scope>
    <source>
        <strain>K12 / MG1655 / ATCC 47076</strain>
    </source>
</reference>
<reference key="2">
    <citation type="journal article" date="1997" name="Science">
        <title>The complete genome sequence of Escherichia coli K-12.</title>
        <authorList>
            <person name="Blattner F.R."/>
            <person name="Plunkett G. III"/>
            <person name="Bloch C.A."/>
            <person name="Perna N.T."/>
            <person name="Burland V."/>
            <person name="Riley M."/>
            <person name="Collado-Vides J."/>
            <person name="Glasner J.D."/>
            <person name="Rode C.K."/>
            <person name="Mayhew G.F."/>
            <person name="Gregor J."/>
            <person name="Davis N.W."/>
            <person name="Kirkpatrick H.A."/>
            <person name="Goeden M.A."/>
            <person name="Rose D.J."/>
            <person name="Mau B."/>
            <person name="Shao Y."/>
        </authorList>
    </citation>
    <scope>NUCLEOTIDE SEQUENCE [LARGE SCALE GENOMIC DNA]</scope>
    <source>
        <strain>K12 / MG1655 / ATCC 47076</strain>
    </source>
</reference>
<reference key="3">
    <citation type="journal article" date="2006" name="Mol. Syst. Biol.">
        <title>Highly accurate genome sequences of Escherichia coli K-12 strains MG1655 and W3110.</title>
        <authorList>
            <person name="Hayashi K."/>
            <person name="Morooka N."/>
            <person name="Yamamoto Y."/>
            <person name="Fujita K."/>
            <person name="Isono K."/>
            <person name="Choi S."/>
            <person name="Ohtsubo E."/>
            <person name="Baba T."/>
            <person name="Wanner B.L."/>
            <person name="Mori H."/>
            <person name="Horiuchi T."/>
        </authorList>
    </citation>
    <scope>NUCLEOTIDE SEQUENCE [LARGE SCALE GENOMIC DNA]</scope>
    <source>
        <strain>K12 / W3110 / ATCC 27325 / DSM 5911</strain>
    </source>
</reference>
<reference key="4">
    <citation type="journal article" date="2005" name="Science">
        <title>Global topology analysis of the Escherichia coli inner membrane proteome.</title>
        <authorList>
            <person name="Daley D.O."/>
            <person name="Rapp M."/>
            <person name="Granseth E."/>
            <person name="Melen K."/>
            <person name="Drew D."/>
            <person name="von Heijne G."/>
        </authorList>
    </citation>
    <scope>TOPOLOGY [LARGE SCALE ANALYSIS]</scope>
    <source>
        <strain>K12 / MG1655 / ATCC 47076</strain>
    </source>
</reference>
<accession>P39282</accession>
<accession>Q2M6E6</accession>
<organism>
    <name type="scientific">Escherichia coli (strain K12)</name>
    <dbReference type="NCBI Taxonomy" id="83333"/>
    <lineage>
        <taxon>Bacteria</taxon>
        <taxon>Pseudomonadati</taxon>
        <taxon>Pseudomonadota</taxon>
        <taxon>Gammaproteobacteria</taxon>
        <taxon>Enterobacterales</taxon>
        <taxon>Enterobacteriaceae</taxon>
        <taxon>Escherichia</taxon>
    </lineage>
</organism>
<feature type="chain" id="PRO_0000213046" description="Inner membrane transporter YjeM">
    <location>
        <begin position="1"/>
        <end position="500"/>
    </location>
</feature>
<feature type="topological domain" description="Cytoplasmic" evidence="1">
    <location>
        <begin position="1"/>
        <end position="7"/>
    </location>
</feature>
<feature type="transmembrane region" description="Helical" evidence="1">
    <location>
        <begin position="8"/>
        <end position="28"/>
    </location>
</feature>
<feature type="topological domain" description="Periplasmic" evidence="1">
    <location>
        <begin position="29"/>
        <end position="37"/>
    </location>
</feature>
<feature type="transmembrane region" description="Helical" evidence="1">
    <location>
        <begin position="38"/>
        <end position="58"/>
    </location>
</feature>
<feature type="topological domain" description="Cytoplasmic" evidence="1">
    <location>
        <begin position="59"/>
        <end position="82"/>
    </location>
</feature>
<feature type="transmembrane region" description="Helical" evidence="1">
    <location>
        <begin position="83"/>
        <end position="103"/>
    </location>
</feature>
<feature type="topological domain" description="Periplasmic" evidence="1">
    <location>
        <begin position="104"/>
        <end position="132"/>
    </location>
</feature>
<feature type="transmembrane region" description="Helical" evidence="1">
    <location>
        <begin position="133"/>
        <end position="153"/>
    </location>
</feature>
<feature type="topological domain" description="Cytoplasmic" evidence="1">
    <location>
        <begin position="154"/>
        <end position="163"/>
    </location>
</feature>
<feature type="transmembrane region" description="Helical" evidence="1">
    <location>
        <begin position="164"/>
        <end position="184"/>
    </location>
</feature>
<feature type="topological domain" description="Periplasmic" evidence="1">
    <location>
        <begin position="185"/>
        <end position="209"/>
    </location>
</feature>
<feature type="transmembrane region" description="Helical" evidence="1">
    <location>
        <begin position="210"/>
        <end position="230"/>
    </location>
</feature>
<feature type="topological domain" description="Cytoplasmic" evidence="1">
    <location>
        <begin position="231"/>
        <end position="243"/>
    </location>
</feature>
<feature type="transmembrane region" description="Helical" evidence="1">
    <location>
        <begin position="244"/>
        <end position="264"/>
    </location>
</feature>
<feature type="topological domain" description="Periplasmic" evidence="1">
    <location>
        <begin position="265"/>
        <end position="319"/>
    </location>
</feature>
<feature type="transmembrane region" description="Helical" evidence="1">
    <location>
        <begin position="320"/>
        <end position="340"/>
    </location>
</feature>
<feature type="topological domain" description="Cytoplasmic" evidence="1">
    <location>
        <begin position="341"/>
        <end position="369"/>
    </location>
</feature>
<feature type="transmembrane region" description="Helical" evidence="1">
    <location>
        <begin position="370"/>
        <end position="390"/>
    </location>
</feature>
<feature type="topological domain" description="Periplasmic" evidence="1">
    <location>
        <begin position="391"/>
        <end position="394"/>
    </location>
</feature>
<feature type="transmembrane region" description="Helical" evidence="1">
    <location>
        <begin position="395"/>
        <end position="415"/>
    </location>
</feature>
<feature type="topological domain" description="Cytoplasmic" evidence="1">
    <location>
        <begin position="416"/>
        <end position="433"/>
    </location>
</feature>
<feature type="transmembrane region" description="Helical" evidence="1">
    <location>
        <begin position="434"/>
        <end position="454"/>
    </location>
</feature>
<feature type="topological domain" description="Periplasmic" evidence="1">
    <location>
        <begin position="455"/>
        <end position="462"/>
    </location>
</feature>
<feature type="transmembrane region" description="Helical" evidence="1">
    <location>
        <begin position="463"/>
        <end position="483"/>
    </location>
</feature>
<feature type="topological domain" description="Cytoplasmic" evidence="1">
    <location>
        <begin position="484"/>
        <end position="500"/>
    </location>
</feature>
<keyword id="KW-0997">Cell inner membrane</keyword>
<keyword id="KW-1003">Cell membrane</keyword>
<keyword id="KW-0472">Membrane</keyword>
<keyword id="KW-1185">Reference proteome</keyword>
<keyword id="KW-0812">Transmembrane</keyword>
<keyword id="KW-1133">Transmembrane helix</keyword>
<keyword id="KW-0813">Transport</keyword>
<proteinExistence type="evidence at protein level"/>
<dbReference type="EMBL" id="U14003">
    <property type="protein sequence ID" value="AAA97055.1"/>
    <property type="status" value="ALT_INIT"/>
    <property type="molecule type" value="Genomic_DNA"/>
</dbReference>
<dbReference type="EMBL" id="U00096">
    <property type="protein sequence ID" value="AAC77116.2"/>
    <property type="molecule type" value="Genomic_DNA"/>
</dbReference>
<dbReference type="EMBL" id="AP009048">
    <property type="protein sequence ID" value="BAE78160.1"/>
    <property type="molecule type" value="Genomic_DNA"/>
</dbReference>
<dbReference type="PIR" id="S56384">
    <property type="entry name" value="S56384"/>
</dbReference>
<dbReference type="RefSeq" id="NP_418580.2">
    <property type="nucleotide sequence ID" value="NC_000913.3"/>
</dbReference>
<dbReference type="RefSeq" id="WP_001336293.1">
    <property type="nucleotide sequence ID" value="NZ_LN832404.1"/>
</dbReference>
<dbReference type="SMR" id="P39282"/>
<dbReference type="BioGRID" id="4260878">
    <property type="interactions" value="292"/>
</dbReference>
<dbReference type="FunCoup" id="P39282">
    <property type="interactions" value="42"/>
</dbReference>
<dbReference type="STRING" id="511145.b4156"/>
<dbReference type="TCDB" id="2.A.3.7.5">
    <property type="family name" value="the amino acid-polyamine-organocation (apc) family"/>
</dbReference>
<dbReference type="jPOST" id="P39282"/>
<dbReference type="PaxDb" id="511145-b4156"/>
<dbReference type="EnsemblBacteria" id="AAC77116">
    <property type="protein sequence ID" value="AAC77116"/>
    <property type="gene ID" value="b4156"/>
</dbReference>
<dbReference type="GeneID" id="948679"/>
<dbReference type="KEGG" id="ecj:JW5739"/>
<dbReference type="KEGG" id="eco:b4156"/>
<dbReference type="KEGG" id="ecoc:C3026_22465"/>
<dbReference type="PATRIC" id="fig|511145.12.peg.4290"/>
<dbReference type="EchoBASE" id="EB2368"/>
<dbReference type="eggNOG" id="COG0531">
    <property type="taxonomic scope" value="Bacteria"/>
</dbReference>
<dbReference type="HOGENOM" id="CLU_020854_2_1_6"/>
<dbReference type="InParanoid" id="P39282"/>
<dbReference type="OMA" id="FMWFASY"/>
<dbReference type="OrthoDB" id="3185104at2"/>
<dbReference type="PhylomeDB" id="P39282"/>
<dbReference type="BioCyc" id="EcoCyc:YJEM-MONOMER"/>
<dbReference type="PRO" id="PR:P39282"/>
<dbReference type="Proteomes" id="UP000000625">
    <property type="component" value="Chromosome"/>
</dbReference>
<dbReference type="GO" id="GO:0005886">
    <property type="term" value="C:plasma membrane"/>
    <property type="evidence" value="ECO:0000314"/>
    <property type="project" value="EcoCyc"/>
</dbReference>
<dbReference type="GO" id="GO:0015171">
    <property type="term" value="F:amino acid transmembrane transporter activity"/>
    <property type="evidence" value="ECO:0000318"/>
    <property type="project" value="GO_Central"/>
</dbReference>
<dbReference type="GO" id="GO:0006865">
    <property type="term" value="P:amino acid transport"/>
    <property type="evidence" value="ECO:0000318"/>
    <property type="project" value="GO_Central"/>
</dbReference>
<dbReference type="FunFam" id="1.20.1740.10:FF:000063">
    <property type="entry name" value="Inner membrane transporter YjeM"/>
    <property type="match status" value="1"/>
</dbReference>
<dbReference type="Gene3D" id="1.20.1740.10">
    <property type="entry name" value="Amino acid/polyamine transporter I"/>
    <property type="match status" value="1"/>
</dbReference>
<dbReference type="InterPro" id="IPR002293">
    <property type="entry name" value="AA/rel_permease1"/>
</dbReference>
<dbReference type="InterPro" id="IPR050367">
    <property type="entry name" value="APC_superfamily"/>
</dbReference>
<dbReference type="NCBIfam" id="NF011775">
    <property type="entry name" value="PRK15238.1"/>
    <property type="match status" value="1"/>
</dbReference>
<dbReference type="PANTHER" id="PTHR42770">
    <property type="entry name" value="AMINO ACID TRANSPORTER-RELATED"/>
    <property type="match status" value="1"/>
</dbReference>
<dbReference type="PANTHER" id="PTHR42770:SF15">
    <property type="entry name" value="GLUTAMATE_GAMMA-AMINOBUTYRATE ANTIPORTER-RELATED"/>
    <property type="match status" value="1"/>
</dbReference>
<dbReference type="Pfam" id="PF13520">
    <property type="entry name" value="AA_permease_2"/>
    <property type="match status" value="1"/>
</dbReference>
<dbReference type="PIRSF" id="PIRSF006060">
    <property type="entry name" value="AA_transporter"/>
    <property type="match status" value="1"/>
</dbReference>
<sequence length="500" mass="54725">MPHTIKKMSLIGLILMIFTSVFGFANSPSAYYLMGYSAIPFYIFSALLFFIPFALMMAEMGAAYRKEEGGIYSWMNNSVGPRFAFIGTFMWFSSYIIWMVSTSAKVWVPFSTFLYGSDMTQHWRIAGLEPTQVVGLLAVAWMILVTVVASKGINKIARITAVGGIAVMCLNLVLLLVSITILLLNGGHFAQDINFLASPNPGYQSGLAMLSFVVFAIFAYGGIEAVGGLVDKTENPEKNFAKGIVFAAIVISIGYSLAIFLWGVSTNWQQVLSNGSVNLGNITYVLMKSLGMTLGNALHLSPEASLSLGVWFARITGLSMFLAYTGAFFTLCYSPLKAIIQGTPKALWPEPMTRLNAMGMPSIAMWMQCGLVTVFILLVSFGGGTASAFFNKLTLMANVSMTLPYLFLALAFPFFKARQDLDRPFVIFKTHLSAMIATVVVVLVVTFANVFTIIQPVVEAGDWDSTLWMIGGPVFFSLLAMAIYQNYCSRVAKNPQWAVE</sequence>
<name>YJEM_ECOLI</name>
<protein>
    <recommendedName>
        <fullName>Inner membrane transporter YjeM</fullName>
    </recommendedName>
</protein>